<reference key="1">
    <citation type="journal article" date="2008" name="Chem. Biol. Interact.">
        <title>Extending the Bacillus cereus group genomics to putative food-borne pathogens of different toxicity.</title>
        <authorList>
            <person name="Lapidus A."/>
            <person name="Goltsman E."/>
            <person name="Auger S."/>
            <person name="Galleron N."/>
            <person name="Segurens B."/>
            <person name="Dossat C."/>
            <person name="Land M.L."/>
            <person name="Broussolle V."/>
            <person name="Brillard J."/>
            <person name="Guinebretiere M.-H."/>
            <person name="Sanchis V."/>
            <person name="Nguen-the C."/>
            <person name="Lereclus D."/>
            <person name="Richardson P."/>
            <person name="Wincker P."/>
            <person name="Weissenbach J."/>
            <person name="Ehrlich S.D."/>
            <person name="Sorokin A."/>
        </authorList>
    </citation>
    <scope>NUCLEOTIDE SEQUENCE [LARGE SCALE GENOMIC DNA]</scope>
    <source>
        <strain>DSM 22905 / CIP 110041 / 391-98 / NVH 391-98</strain>
    </source>
</reference>
<proteinExistence type="inferred from homology"/>
<gene>
    <name evidence="1" type="primary">purH</name>
    <name type="ordered locus">Bcer98_0277</name>
</gene>
<sequence length="511" mass="55681">MKKRALVSVSNKTGVVEFVKGLLEQGIEVISTGGTKKLLEENGLQVMGISEVTGFPEIMDGRVKTLHPNIHGGLLAVRDNEAHVAEMSELGIQLIDFVVVNLYPFKETIAKPDVTFADAIENIDIGGPTMIRSAAKNHKFVSVIVDPADYDVVLAELKEKGEVTDETKRKLAAKVFRHTAAYDALISNYLTEQMGEESPEILTVTFEKKQDLRYGENPHQKATFYKAPFAVASSVAYAEQLHGKELSYNNINDADAALSIVKEFTEPAVVAVKHMNPCGVGVGTDIHEAYTRAYEADPVSIFGGIIAANREIDKRVAEKLHEIFLEIIIAPSFSKEALEVLQSKKNLRLLTVNIEKTTSASKKLTSVQGGLLVQEEDTLALNEETIIIPTKREPTEQEWNDLKLAWKVVKHVKSNAIVLAKDNMTIGVGAGQMNRVGSAKIAISQAGSKAQGSALASDAFFPMPDTVEEAAKAGITAIIQPGGSIRDEDSIKKADEYGITMVFTGVRHFKH</sequence>
<keyword id="KW-0378">Hydrolase</keyword>
<keyword id="KW-0511">Multifunctional enzyme</keyword>
<keyword id="KW-0658">Purine biosynthesis</keyword>
<keyword id="KW-0808">Transferase</keyword>
<dbReference type="EC" id="2.1.2.3" evidence="1"/>
<dbReference type="EC" id="3.5.4.10" evidence="1"/>
<dbReference type="EMBL" id="CP000764">
    <property type="protein sequence ID" value="ABS20640.1"/>
    <property type="molecule type" value="Genomic_DNA"/>
</dbReference>
<dbReference type="RefSeq" id="WP_011983399.1">
    <property type="nucleotide sequence ID" value="NC_009674.1"/>
</dbReference>
<dbReference type="SMR" id="A7GKI2"/>
<dbReference type="STRING" id="315749.Bcer98_0277"/>
<dbReference type="GeneID" id="33895632"/>
<dbReference type="KEGG" id="bcy:Bcer98_0277"/>
<dbReference type="eggNOG" id="COG0138">
    <property type="taxonomic scope" value="Bacteria"/>
</dbReference>
<dbReference type="HOGENOM" id="CLU_016316_5_2_9"/>
<dbReference type="OrthoDB" id="9802065at2"/>
<dbReference type="UniPathway" id="UPA00074">
    <property type="reaction ID" value="UER00133"/>
</dbReference>
<dbReference type="UniPathway" id="UPA00074">
    <property type="reaction ID" value="UER00135"/>
</dbReference>
<dbReference type="Proteomes" id="UP000002300">
    <property type="component" value="Chromosome"/>
</dbReference>
<dbReference type="GO" id="GO:0005829">
    <property type="term" value="C:cytosol"/>
    <property type="evidence" value="ECO:0007669"/>
    <property type="project" value="TreeGrafter"/>
</dbReference>
<dbReference type="GO" id="GO:0003937">
    <property type="term" value="F:IMP cyclohydrolase activity"/>
    <property type="evidence" value="ECO:0007669"/>
    <property type="project" value="UniProtKB-UniRule"/>
</dbReference>
<dbReference type="GO" id="GO:0004643">
    <property type="term" value="F:phosphoribosylaminoimidazolecarboxamide formyltransferase activity"/>
    <property type="evidence" value="ECO:0007669"/>
    <property type="project" value="UniProtKB-UniRule"/>
</dbReference>
<dbReference type="GO" id="GO:0006189">
    <property type="term" value="P:'de novo' IMP biosynthetic process"/>
    <property type="evidence" value="ECO:0007669"/>
    <property type="project" value="UniProtKB-UniRule"/>
</dbReference>
<dbReference type="CDD" id="cd01421">
    <property type="entry name" value="IMPCH"/>
    <property type="match status" value="1"/>
</dbReference>
<dbReference type="FunFam" id="3.40.140.20:FF:000001">
    <property type="entry name" value="Bifunctional purine biosynthesis protein PurH"/>
    <property type="match status" value="1"/>
</dbReference>
<dbReference type="FunFam" id="3.40.140.20:FF:000002">
    <property type="entry name" value="Bifunctional purine biosynthesis protein PurH"/>
    <property type="match status" value="1"/>
</dbReference>
<dbReference type="FunFam" id="3.40.50.1380:FF:000001">
    <property type="entry name" value="Bifunctional purine biosynthesis protein PurH"/>
    <property type="match status" value="1"/>
</dbReference>
<dbReference type="Gene3D" id="3.40.140.20">
    <property type="match status" value="2"/>
</dbReference>
<dbReference type="Gene3D" id="3.40.50.1380">
    <property type="entry name" value="Methylglyoxal synthase-like domain"/>
    <property type="match status" value="1"/>
</dbReference>
<dbReference type="HAMAP" id="MF_00139">
    <property type="entry name" value="PurH"/>
    <property type="match status" value="1"/>
</dbReference>
<dbReference type="InterPro" id="IPR024051">
    <property type="entry name" value="AICAR_Tfase_dup_dom_sf"/>
</dbReference>
<dbReference type="InterPro" id="IPR016193">
    <property type="entry name" value="Cytidine_deaminase-like"/>
</dbReference>
<dbReference type="InterPro" id="IPR011607">
    <property type="entry name" value="MGS-like_dom"/>
</dbReference>
<dbReference type="InterPro" id="IPR036914">
    <property type="entry name" value="MGS-like_dom_sf"/>
</dbReference>
<dbReference type="InterPro" id="IPR002695">
    <property type="entry name" value="PurH-like"/>
</dbReference>
<dbReference type="NCBIfam" id="NF002049">
    <property type="entry name" value="PRK00881.1"/>
    <property type="match status" value="1"/>
</dbReference>
<dbReference type="NCBIfam" id="TIGR00355">
    <property type="entry name" value="purH"/>
    <property type="match status" value="1"/>
</dbReference>
<dbReference type="PANTHER" id="PTHR11692:SF0">
    <property type="entry name" value="BIFUNCTIONAL PURINE BIOSYNTHESIS PROTEIN ATIC"/>
    <property type="match status" value="1"/>
</dbReference>
<dbReference type="PANTHER" id="PTHR11692">
    <property type="entry name" value="BIFUNCTIONAL PURINE BIOSYNTHESIS PROTEIN PURH"/>
    <property type="match status" value="1"/>
</dbReference>
<dbReference type="Pfam" id="PF01808">
    <property type="entry name" value="AICARFT_IMPCHas"/>
    <property type="match status" value="1"/>
</dbReference>
<dbReference type="Pfam" id="PF02142">
    <property type="entry name" value="MGS"/>
    <property type="match status" value="1"/>
</dbReference>
<dbReference type="PIRSF" id="PIRSF000414">
    <property type="entry name" value="AICARFT_IMPCHas"/>
    <property type="match status" value="1"/>
</dbReference>
<dbReference type="SMART" id="SM00798">
    <property type="entry name" value="AICARFT_IMPCHas"/>
    <property type="match status" value="1"/>
</dbReference>
<dbReference type="SMART" id="SM00851">
    <property type="entry name" value="MGS"/>
    <property type="match status" value="1"/>
</dbReference>
<dbReference type="SUPFAM" id="SSF53927">
    <property type="entry name" value="Cytidine deaminase-like"/>
    <property type="match status" value="1"/>
</dbReference>
<dbReference type="SUPFAM" id="SSF52335">
    <property type="entry name" value="Methylglyoxal synthase-like"/>
    <property type="match status" value="1"/>
</dbReference>
<dbReference type="PROSITE" id="PS51855">
    <property type="entry name" value="MGS"/>
    <property type="match status" value="1"/>
</dbReference>
<comment type="catalytic activity">
    <reaction evidence="1">
        <text>(6R)-10-formyltetrahydrofolate + 5-amino-1-(5-phospho-beta-D-ribosyl)imidazole-4-carboxamide = 5-formamido-1-(5-phospho-D-ribosyl)imidazole-4-carboxamide + (6S)-5,6,7,8-tetrahydrofolate</text>
        <dbReference type="Rhea" id="RHEA:22192"/>
        <dbReference type="ChEBI" id="CHEBI:57453"/>
        <dbReference type="ChEBI" id="CHEBI:58467"/>
        <dbReference type="ChEBI" id="CHEBI:58475"/>
        <dbReference type="ChEBI" id="CHEBI:195366"/>
        <dbReference type="EC" id="2.1.2.3"/>
    </reaction>
</comment>
<comment type="catalytic activity">
    <reaction evidence="1">
        <text>IMP + H2O = 5-formamido-1-(5-phospho-D-ribosyl)imidazole-4-carboxamide</text>
        <dbReference type="Rhea" id="RHEA:18445"/>
        <dbReference type="ChEBI" id="CHEBI:15377"/>
        <dbReference type="ChEBI" id="CHEBI:58053"/>
        <dbReference type="ChEBI" id="CHEBI:58467"/>
        <dbReference type="EC" id="3.5.4.10"/>
    </reaction>
</comment>
<comment type="pathway">
    <text evidence="1">Purine metabolism; IMP biosynthesis via de novo pathway; 5-formamido-1-(5-phospho-D-ribosyl)imidazole-4-carboxamide from 5-amino-1-(5-phospho-D-ribosyl)imidazole-4-carboxamide (10-formyl THF route): step 1/1.</text>
</comment>
<comment type="pathway">
    <text evidence="1">Purine metabolism; IMP biosynthesis via de novo pathway; IMP from 5-formamido-1-(5-phospho-D-ribosyl)imidazole-4-carboxamide: step 1/1.</text>
</comment>
<comment type="domain">
    <text evidence="1">The IMP cyclohydrolase activity resides in the N-terminal region.</text>
</comment>
<comment type="similarity">
    <text evidence="1">Belongs to the PurH family.</text>
</comment>
<evidence type="ECO:0000255" key="1">
    <source>
        <dbReference type="HAMAP-Rule" id="MF_00139"/>
    </source>
</evidence>
<evidence type="ECO:0000255" key="2">
    <source>
        <dbReference type="PROSITE-ProRule" id="PRU01202"/>
    </source>
</evidence>
<feature type="chain" id="PRO_1000076473" description="Bifunctional purine biosynthesis protein PurH">
    <location>
        <begin position="1"/>
        <end position="511"/>
    </location>
</feature>
<feature type="domain" description="MGS-like" evidence="2">
    <location>
        <begin position="1"/>
        <end position="145"/>
    </location>
</feature>
<organism>
    <name type="scientific">Bacillus cytotoxicus (strain DSM 22905 / CIP 110041 / 391-98 / NVH 391-98)</name>
    <dbReference type="NCBI Taxonomy" id="315749"/>
    <lineage>
        <taxon>Bacteria</taxon>
        <taxon>Bacillati</taxon>
        <taxon>Bacillota</taxon>
        <taxon>Bacilli</taxon>
        <taxon>Bacillales</taxon>
        <taxon>Bacillaceae</taxon>
        <taxon>Bacillus</taxon>
        <taxon>Bacillus cereus group</taxon>
    </lineage>
</organism>
<accession>A7GKI2</accession>
<name>PUR9_BACCN</name>
<protein>
    <recommendedName>
        <fullName evidence="1">Bifunctional purine biosynthesis protein PurH</fullName>
    </recommendedName>
    <domain>
        <recommendedName>
            <fullName evidence="1">Phosphoribosylaminoimidazolecarboxamide formyltransferase</fullName>
            <ecNumber evidence="1">2.1.2.3</ecNumber>
        </recommendedName>
        <alternativeName>
            <fullName evidence="1">AICAR transformylase</fullName>
        </alternativeName>
    </domain>
    <domain>
        <recommendedName>
            <fullName evidence="1">IMP cyclohydrolase</fullName>
            <ecNumber evidence="1">3.5.4.10</ecNumber>
        </recommendedName>
        <alternativeName>
            <fullName evidence="1">ATIC</fullName>
        </alternativeName>
        <alternativeName>
            <fullName evidence="1">IMP synthase</fullName>
        </alternativeName>
        <alternativeName>
            <fullName evidence="1">Inosinicase</fullName>
        </alternativeName>
    </domain>
</protein>